<accession>P56096</accession>
<reference key="1">
    <citation type="journal article" date="1997" name="Nature">
        <title>The complete genome sequence of the gastric pathogen Helicobacter pylori.</title>
        <authorList>
            <person name="Tomb J.-F."/>
            <person name="White O."/>
            <person name="Kerlavage A.R."/>
            <person name="Clayton R.A."/>
            <person name="Sutton G.G."/>
            <person name="Fleischmann R.D."/>
            <person name="Ketchum K.A."/>
            <person name="Klenk H.-P."/>
            <person name="Gill S.R."/>
            <person name="Dougherty B.A."/>
            <person name="Nelson K.E."/>
            <person name="Quackenbush J."/>
            <person name="Zhou L."/>
            <person name="Kirkness E.F."/>
            <person name="Peterson S.N."/>
            <person name="Loftus B.J."/>
            <person name="Richardson D.L."/>
            <person name="Dodson R.J."/>
            <person name="Khalak H.G."/>
            <person name="Glodek A."/>
            <person name="McKenney K."/>
            <person name="FitzGerald L.M."/>
            <person name="Lee N."/>
            <person name="Adams M.D."/>
            <person name="Hickey E.K."/>
            <person name="Berg D.E."/>
            <person name="Gocayne J.D."/>
            <person name="Utterback T.R."/>
            <person name="Peterson J.D."/>
            <person name="Kelley J.M."/>
            <person name="Cotton M.D."/>
            <person name="Weidman J.F."/>
            <person name="Fujii C."/>
            <person name="Bowman C."/>
            <person name="Watthey L."/>
            <person name="Wallin E."/>
            <person name="Hayes W.S."/>
            <person name="Borodovsky M."/>
            <person name="Karp P.D."/>
            <person name="Smith H.O."/>
            <person name="Fraser C.M."/>
            <person name="Venter J.C."/>
        </authorList>
    </citation>
    <scope>NUCLEOTIDE SEQUENCE [LARGE SCALE GENOMIC DNA]</scope>
    <source>
        <strain>ATCC 700392 / 26695</strain>
    </source>
</reference>
<name>FTSW_HELPY</name>
<dbReference type="EC" id="2.4.99.28" evidence="3"/>
<dbReference type="EMBL" id="AE000511">
    <property type="protein sequence ID" value="AAD08600.1"/>
    <property type="molecule type" value="Genomic_DNA"/>
</dbReference>
<dbReference type="PIR" id="H64714">
    <property type="entry name" value="H64714"/>
</dbReference>
<dbReference type="RefSeq" id="NP_208351.1">
    <property type="nucleotide sequence ID" value="NC_000915.1"/>
</dbReference>
<dbReference type="FunCoup" id="P56096">
    <property type="interactions" value="124"/>
</dbReference>
<dbReference type="IntAct" id="P56096">
    <property type="interactions" value="1"/>
</dbReference>
<dbReference type="STRING" id="85962.HP_1560"/>
<dbReference type="PaxDb" id="85962-C694_08085"/>
<dbReference type="EnsemblBacteria" id="AAD08600">
    <property type="protein sequence ID" value="AAD08600"/>
    <property type="gene ID" value="HP_1560"/>
</dbReference>
<dbReference type="KEGG" id="hpy:HP_1560"/>
<dbReference type="PATRIC" id="fig|85962.8.peg.1641"/>
<dbReference type="eggNOG" id="COG0772">
    <property type="taxonomic scope" value="Bacteria"/>
</dbReference>
<dbReference type="InParanoid" id="P56096"/>
<dbReference type="OrthoDB" id="9768187at2"/>
<dbReference type="PhylomeDB" id="P56096"/>
<dbReference type="UniPathway" id="UPA00219"/>
<dbReference type="Proteomes" id="UP000000429">
    <property type="component" value="Chromosome"/>
</dbReference>
<dbReference type="GO" id="GO:0032153">
    <property type="term" value="C:cell division site"/>
    <property type="evidence" value="ECO:0000318"/>
    <property type="project" value="GO_Central"/>
</dbReference>
<dbReference type="GO" id="GO:0005886">
    <property type="term" value="C:plasma membrane"/>
    <property type="evidence" value="ECO:0000318"/>
    <property type="project" value="GO_Central"/>
</dbReference>
<dbReference type="GO" id="GO:0015648">
    <property type="term" value="F:lipid-linked peptidoglycan transporter activity"/>
    <property type="evidence" value="ECO:0000318"/>
    <property type="project" value="GO_Central"/>
</dbReference>
<dbReference type="GO" id="GO:0008955">
    <property type="term" value="F:peptidoglycan glycosyltransferase activity"/>
    <property type="evidence" value="ECO:0007669"/>
    <property type="project" value="RHEA"/>
</dbReference>
<dbReference type="GO" id="GO:0051301">
    <property type="term" value="P:cell division"/>
    <property type="evidence" value="ECO:0000318"/>
    <property type="project" value="GO_Central"/>
</dbReference>
<dbReference type="GO" id="GO:0071555">
    <property type="term" value="P:cell wall organization"/>
    <property type="evidence" value="ECO:0007669"/>
    <property type="project" value="UniProtKB-KW"/>
</dbReference>
<dbReference type="GO" id="GO:0009252">
    <property type="term" value="P:peptidoglycan biosynthetic process"/>
    <property type="evidence" value="ECO:0007669"/>
    <property type="project" value="UniProtKB-UniPathway"/>
</dbReference>
<dbReference type="GO" id="GO:0008360">
    <property type="term" value="P:regulation of cell shape"/>
    <property type="evidence" value="ECO:0000318"/>
    <property type="project" value="GO_Central"/>
</dbReference>
<dbReference type="InterPro" id="IPR018365">
    <property type="entry name" value="Cell_cycle_FtsW-rel_CS"/>
</dbReference>
<dbReference type="InterPro" id="IPR001182">
    <property type="entry name" value="FtsW/RodA"/>
</dbReference>
<dbReference type="PANTHER" id="PTHR30474">
    <property type="entry name" value="CELL CYCLE PROTEIN"/>
    <property type="match status" value="1"/>
</dbReference>
<dbReference type="PANTHER" id="PTHR30474:SF2">
    <property type="entry name" value="PEPTIDOGLYCAN GLYCOSYLTRANSFERASE FTSW-RELATED"/>
    <property type="match status" value="1"/>
</dbReference>
<dbReference type="Pfam" id="PF01098">
    <property type="entry name" value="FTSW_RODA_SPOVE"/>
    <property type="match status" value="1"/>
</dbReference>
<dbReference type="PROSITE" id="PS00428">
    <property type="entry name" value="FTSW_RODA_SPOVE"/>
    <property type="match status" value="1"/>
</dbReference>
<evidence type="ECO:0000250" key="1"/>
<evidence type="ECO:0000250" key="2">
    <source>
        <dbReference type="UniProtKB" id="O07639"/>
    </source>
</evidence>
<evidence type="ECO:0000250" key="3">
    <source>
        <dbReference type="UniProtKB" id="P39604"/>
    </source>
</evidence>
<evidence type="ECO:0000255" key="4"/>
<evidence type="ECO:0000305" key="5"/>
<keyword id="KW-0131">Cell cycle</keyword>
<keyword id="KW-0132">Cell division</keyword>
<keyword id="KW-0997">Cell inner membrane</keyword>
<keyword id="KW-1003">Cell membrane</keyword>
<keyword id="KW-0133">Cell shape</keyword>
<keyword id="KW-0961">Cell wall biogenesis/degradation</keyword>
<keyword id="KW-0328">Glycosyltransferase</keyword>
<keyword id="KW-0472">Membrane</keyword>
<keyword id="KW-0573">Peptidoglycan synthesis</keyword>
<keyword id="KW-1185">Reference proteome</keyword>
<keyword id="KW-0808">Transferase</keyword>
<keyword id="KW-0812">Transmembrane</keyword>
<keyword id="KW-1133">Transmembrane helix</keyword>
<organism>
    <name type="scientific">Helicobacter pylori (strain ATCC 700392 / 26695)</name>
    <name type="common">Campylobacter pylori</name>
    <dbReference type="NCBI Taxonomy" id="85962"/>
    <lineage>
        <taxon>Bacteria</taxon>
        <taxon>Pseudomonadati</taxon>
        <taxon>Campylobacterota</taxon>
        <taxon>Epsilonproteobacteria</taxon>
        <taxon>Campylobacterales</taxon>
        <taxon>Helicobacteraceae</taxon>
        <taxon>Helicobacter</taxon>
    </lineage>
</organism>
<feature type="chain" id="PRO_0000062705" description="Probable peptidoglycan glycosyltransferase FtsW">
    <location>
        <begin position="1"/>
        <end position="388"/>
    </location>
</feature>
<feature type="topological domain" description="Cytoplasmic" evidence="4">
    <location>
        <begin position="1"/>
        <end position="6"/>
    </location>
</feature>
<feature type="transmembrane region" description="Helical" evidence="4">
    <location>
        <begin position="7"/>
        <end position="27"/>
    </location>
</feature>
<feature type="topological domain" description="Periplasmic" evidence="4">
    <location>
        <begin position="28"/>
        <end position="38"/>
    </location>
</feature>
<feature type="transmembrane region" description="Helical" evidence="4">
    <location>
        <begin position="39"/>
        <end position="59"/>
    </location>
</feature>
<feature type="topological domain" description="Cytoplasmic" evidence="4">
    <location>
        <begin position="60"/>
        <end position="70"/>
    </location>
</feature>
<feature type="transmembrane region" description="Helical" evidence="4">
    <location>
        <begin position="71"/>
        <end position="91"/>
    </location>
</feature>
<feature type="topological domain" description="Periplasmic" evidence="4">
    <location>
        <begin position="92"/>
        <end position="105"/>
    </location>
</feature>
<feature type="transmembrane region" description="Helical" evidence="4">
    <location>
        <begin position="106"/>
        <end position="126"/>
    </location>
</feature>
<feature type="topological domain" description="Cytoplasmic" evidence="4">
    <location>
        <begin position="127"/>
        <end position="144"/>
    </location>
</feature>
<feature type="transmembrane region" description="Helical" evidence="4">
    <location>
        <begin position="145"/>
        <end position="165"/>
    </location>
</feature>
<feature type="topological domain" description="Periplasmic" evidence="4">
    <location>
        <begin position="166"/>
        <end position="168"/>
    </location>
</feature>
<feature type="transmembrane region" description="Helical" evidence="4">
    <location>
        <begin position="169"/>
        <end position="186"/>
    </location>
</feature>
<feature type="topological domain" description="Cytoplasmic" evidence="4">
    <location>
        <position position="187"/>
    </location>
</feature>
<feature type="transmembrane region" description="Helical" evidence="4">
    <location>
        <begin position="188"/>
        <end position="210"/>
    </location>
</feature>
<feature type="topological domain" description="Periplasmic" evidence="4">
    <location>
        <begin position="211"/>
        <end position="294"/>
    </location>
</feature>
<feature type="transmembrane region" description="Helical" evidence="4">
    <location>
        <begin position="295"/>
        <end position="315"/>
    </location>
</feature>
<feature type="topological domain" description="Cytoplasmic" evidence="4">
    <location>
        <begin position="316"/>
        <end position="327"/>
    </location>
</feature>
<feature type="transmembrane region" description="Helical" evidence="4">
    <location>
        <begin position="328"/>
        <end position="348"/>
    </location>
</feature>
<feature type="topological domain" description="Periplasmic" evidence="4">
    <location>
        <begin position="349"/>
        <end position="358"/>
    </location>
</feature>
<feature type="transmembrane region" description="Helical" evidence="4">
    <location>
        <begin position="359"/>
        <end position="379"/>
    </location>
</feature>
<feature type="topological domain" description="Cytoplasmic" evidence="4">
    <location>
        <begin position="380"/>
        <end position="388"/>
    </location>
</feature>
<protein>
    <recommendedName>
        <fullName evidence="3">Probable peptidoglycan glycosyltransferase FtsW</fullName>
        <shortName evidence="3">PGT</shortName>
        <ecNumber evidence="3">2.4.99.28</ecNumber>
    </recommendedName>
    <alternativeName>
        <fullName evidence="2">Cell division protein FtsW</fullName>
    </alternativeName>
    <alternativeName>
        <fullName evidence="3">Cell wall polymerase</fullName>
    </alternativeName>
    <alternativeName>
        <fullName evidence="3">Peptidoglycan polymerase</fullName>
        <shortName evidence="3">PG polymerase</shortName>
    </alternativeName>
</protein>
<comment type="function">
    <text evidence="3">Peptidoglycan polymerase that is essential for cell division.</text>
</comment>
<comment type="catalytic activity">
    <reaction evidence="3">
        <text>[GlcNAc-(1-&gt;4)-Mur2Ac(oyl-L-Ala-gamma-D-Glu-L-Lys-D-Ala-D-Ala)](n)-di-trans,octa-cis-undecaprenyl diphosphate + beta-D-GlcNAc-(1-&gt;4)-Mur2Ac(oyl-L-Ala-gamma-D-Glu-L-Lys-D-Ala-D-Ala)-di-trans,octa-cis-undecaprenyl diphosphate = [GlcNAc-(1-&gt;4)-Mur2Ac(oyl-L-Ala-gamma-D-Glu-L-Lys-D-Ala-D-Ala)](n+1)-di-trans,octa-cis-undecaprenyl diphosphate + di-trans,octa-cis-undecaprenyl diphosphate + H(+)</text>
        <dbReference type="Rhea" id="RHEA:23708"/>
        <dbReference type="Rhea" id="RHEA-COMP:9602"/>
        <dbReference type="Rhea" id="RHEA-COMP:9603"/>
        <dbReference type="ChEBI" id="CHEBI:15378"/>
        <dbReference type="ChEBI" id="CHEBI:58405"/>
        <dbReference type="ChEBI" id="CHEBI:60033"/>
        <dbReference type="ChEBI" id="CHEBI:78435"/>
        <dbReference type="EC" id="2.4.99.28"/>
    </reaction>
</comment>
<comment type="pathway">
    <text evidence="3">Cell wall biogenesis; peptidoglycan biosynthesis.</text>
</comment>
<comment type="subcellular location">
    <subcellularLocation>
        <location evidence="1">Cell inner membrane</location>
        <topology evidence="4">Multi-pass membrane protein</topology>
    </subcellularLocation>
    <text evidence="1">Localizes to the division septum.</text>
</comment>
<comment type="similarity">
    <text evidence="5">Belongs to the SEDS family. FtsW subfamily.</text>
</comment>
<sequence length="388" mass="42480">MTTDRNLFFCASLLIFLGVLMSYSLSTYTTVVLYHYGEFHFFIRQLVSAIIGIVIMWGLSRVDPSKWFSRLGFFLLFVPPLLIIGMFFLPESLSSSAGGAKRWIRLGFFSLAPLEFLKIGFTFFLAWSLSRTFVAKEKANVKEELITFVPYSVVFVALAIGVGVLQNDLGQIVLLGAVLAVLLVFSGGSVHLFGLIISGAFAISVLAIVTSEHRILRLKLWWSNLQNSLFTLLPDRLANALRISDLPESYQVFHAGNAMHNGGLFGQGLGLGQIKLGFLSEVHTDMVLAGIAEEWGFLGLCVCFILFSVLIVLIFRIANRLKEPKYSLFCVGVVLLISFSLVINAFGVGGILPVKGLAVPFLSYGGSSLLANCIAIGLVLXLARYTKG</sequence>
<gene>
    <name type="primary">ftsW</name>
    <name type="ordered locus">HP_1560</name>
</gene>
<proteinExistence type="inferred from homology"/>